<keyword id="KW-0021">Allosteric enzyme</keyword>
<keyword id="KW-0067">ATP-binding</keyword>
<keyword id="KW-0319">Glycerol metabolism</keyword>
<keyword id="KW-0418">Kinase</keyword>
<keyword id="KW-0479">Metal-binding</keyword>
<keyword id="KW-0547">Nucleotide-binding</keyword>
<keyword id="KW-0808">Transferase</keyword>
<keyword id="KW-0862">Zinc</keyword>
<protein>
    <recommendedName>
        <fullName evidence="1">Glycerol kinase</fullName>
        <ecNumber evidence="1">2.7.1.30</ecNumber>
    </recommendedName>
    <alternativeName>
        <fullName evidence="1">ATP:glycerol 3-phosphotransferase</fullName>
    </alternativeName>
    <alternativeName>
        <fullName evidence="1">Glycerokinase</fullName>
        <shortName evidence="1">GK</shortName>
    </alternativeName>
</protein>
<accession>A4WG72</accession>
<comment type="function">
    <text evidence="1">Key enzyme in the regulation of glycerol uptake and metabolism. Catalyzes the phosphorylation of glycerol to yield sn-glycerol 3-phosphate.</text>
</comment>
<comment type="catalytic activity">
    <reaction evidence="1">
        <text>glycerol + ATP = sn-glycerol 3-phosphate + ADP + H(+)</text>
        <dbReference type="Rhea" id="RHEA:21644"/>
        <dbReference type="ChEBI" id="CHEBI:15378"/>
        <dbReference type="ChEBI" id="CHEBI:17754"/>
        <dbReference type="ChEBI" id="CHEBI:30616"/>
        <dbReference type="ChEBI" id="CHEBI:57597"/>
        <dbReference type="ChEBI" id="CHEBI:456216"/>
        <dbReference type="EC" id="2.7.1.30"/>
    </reaction>
</comment>
<comment type="activity regulation">
    <text evidence="1">Activity of this regulatory enzyme is affected by several metabolites. Allosterically and non-competitively inhibited by fructose 1,6-bisphosphate (FBP) and unphosphorylated phosphocarrier protein EIIA-Glc (III-Glc), an integral component of the bacterial phosphotransferase (PTS) system.</text>
</comment>
<comment type="pathway">
    <text evidence="1">Polyol metabolism; glycerol degradation via glycerol kinase pathway; sn-glycerol 3-phosphate from glycerol: step 1/1.</text>
</comment>
<comment type="subunit">
    <text evidence="1">Homotetramer and homodimer (in equilibrium). Heterodimer with EIIA-Glc. Binds 1 zinc ion per glycerol kinase EIIA-Glc dimer. The zinc ion is important for dimerization.</text>
</comment>
<comment type="similarity">
    <text evidence="1">Belongs to the FGGY kinase family.</text>
</comment>
<reference key="1">
    <citation type="journal article" date="2010" name="PLoS Genet.">
        <title>Genome sequence of the plant growth promoting endophytic bacterium Enterobacter sp. 638.</title>
        <authorList>
            <person name="Taghavi S."/>
            <person name="van der Lelie D."/>
            <person name="Hoffman A."/>
            <person name="Zhang Y.B."/>
            <person name="Walla M.D."/>
            <person name="Vangronsveld J."/>
            <person name="Newman L."/>
            <person name="Monchy S."/>
        </authorList>
    </citation>
    <scope>NUCLEOTIDE SEQUENCE [LARGE SCALE GENOMIC DNA]</scope>
    <source>
        <strain>638</strain>
    </source>
</reference>
<evidence type="ECO:0000255" key="1">
    <source>
        <dbReference type="HAMAP-Rule" id="MF_00186"/>
    </source>
</evidence>
<name>GLPK_ENT38</name>
<feature type="chain" id="PRO_1000058446" description="Glycerol kinase">
    <location>
        <begin position="1"/>
        <end position="502"/>
    </location>
</feature>
<feature type="binding site" evidence="1">
    <location>
        <position position="14"/>
    </location>
    <ligand>
        <name>ADP</name>
        <dbReference type="ChEBI" id="CHEBI:456216"/>
    </ligand>
</feature>
<feature type="binding site" evidence="1">
    <location>
        <position position="14"/>
    </location>
    <ligand>
        <name>ATP</name>
        <dbReference type="ChEBI" id="CHEBI:30616"/>
    </ligand>
</feature>
<feature type="binding site" evidence="1">
    <location>
        <position position="14"/>
    </location>
    <ligand>
        <name>sn-glycerol 3-phosphate</name>
        <dbReference type="ChEBI" id="CHEBI:57597"/>
    </ligand>
</feature>
<feature type="binding site" evidence="1">
    <location>
        <position position="15"/>
    </location>
    <ligand>
        <name>ATP</name>
        <dbReference type="ChEBI" id="CHEBI:30616"/>
    </ligand>
</feature>
<feature type="binding site" evidence="1">
    <location>
        <position position="16"/>
    </location>
    <ligand>
        <name>ATP</name>
        <dbReference type="ChEBI" id="CHEBI:30616"/>
    </ligand>
</feature>
<feature type="binding site" evidence="1">
    <location>
        <position position="18"/>
    </location>
    <ligand>
        <name>ADP</name>
        <dbReference type="ChEBI" id="CHEBI:456216"/>
    </ligand>
</feature>
<feature type="binding site" evidence="1">
    <location>
        <position position="84"/>
    </location>
    <ligand>
        <name>glycerol</name>
        <dbReference type="ChEBI" id="CHEBI:17754"/>
    </ligand>
</feature>
<feature type="binding site" evidence="1">
    <location>
        <position position="84"/>
    </location>
    <ligand>
        <name>sn-glycerol 3-phosphate</name>
        <dbReference type="ChEBI" id="CHEBI:57597"/>
    </ligand>
</feature>
<feature type="binding site" evidence="1">
    <location>
        <position position="85"/>
    </location>
    <ligand>
        <name>glycerol</name>
        <dbReference type="ChEBI" id="CHEBI:17754"/>
    </ligand>
</feature>
<feature type="binding site" evidence="1">
    <location>
        <position position="85"/>
    </location>
    <ligand>
        <name>sn-glycerol 3-phosphate</name>
        <dbReference type="ChEBI" id="CHEBI:57597"/>
    </ligand>
</feature>
<feature type="binding site" evidence="1">
    <location>
        <position position="136"/>
    </location>
    <ligand>
        <name>glycerol</name>
        <dbReference type="ChEBI" id="CHEBI:17754"/>
    </ligand>
</feature>
<feature type="binding site" evidence="1">
    <location>
        <position position="136"/>
    </location>
    <ligand>
        <name>sn-glycerol 3-phosphate</name>
        <dbReference type="ChEBI" id="CHEBI:57597"/>
    </ligand>
</feature>
<feature type="binding site" evidence="1">
    <location>
        <position position="246"/>
    </location>
    <ligand>
        <name>glycerol</name>
        <dbReference type="ChEBI" id="CHEBI:17754"/>
    </ligand>
</feature>
<feature type="binding site" evidence="1">
    <location>
        <position position="246"/>
    </location>
    <ligand>
        <name>sn-glycerol 3-phosphate</name>
        <dbReference type="ChEBI" id="CHEBI:57597"/>
    </ligand>
</feature>
<feature type="binding site" evidence="1">
    <location>
        <position position="247"/>
    </location>
    <ligand>
        <name>glycerol</name>
        <dbReference type="ChEBI" id="CHEBI:17754"/>
    </ligand>
</feature>
<feature type="binding site" evidence="1">
    <location>
        <position position="268"/>
    </location>
    <ligand>
        <name>ADP</name>
        <dbReference type="ChEBI" id="CHEBI:456216"/>
    </ligand>
</feature>
<feature type="binding site" evidence="1">
    <location>
        <position position="268"/>
    </location>
    <ligand>
        <name>ATP</name>
        <dbReference type="ChEBI" id="CHEBI:30616"/>
    </ligand>
</feature>
<feature type="binding site" evidence="1">
    <location>
        <position position="311"/>
    </location>
    <ligand>
        <name>ADP</name>
        <dbReference type="ChEBI" id="CHEBI:456216"/>
    </ligand>
</feature>
<feature type="binding site" evidence="1">
    <location>
        <position position="311"/>
    </location>
    <ligand>
        <name>ATP</name>
        <dbReference type="ChEBI" id="CHEBI:30616"/>
    </ligand>
</feature>
<feature type="binding site" evidence="1">
    <location>
        <position position="315"/>
    </location>
    <ligand>
        <name>ATP</name>
        <dbReference type="ChEBI" id="CHEBI:30616"/>
    </ligand>
</feature>
<feature type="binding site" evidence="1">
    <location>
        <position position="412"/>
    </location>
    <ligand>
        <name>ADP</name>
        <dbReference type="ChEBI" id="CHEBI:456216"/>
    </ligand>
</feature>
<feature type="binding site" evidence="1">
    <location>
        <position position="412"/>
    </location>
    <ligand>
        <name>ATP</name>
        <dbReference type="ChEBI" id="CHEBI:30616"/>
    </ligand>
</feature>
<feature type="binding site" evidence="1">
    <location>
        <position position="416"/>
    </location>
    <ligand>
        <name>ADP</name>
        <dbReference type="ChEBI" id="CHEBI:456216"/>
    </ligand>
</feature>
<organism>
    <name type="scientific">Enterobacter sp. (strain 638)</name>
    <dbReference type="NCBI Taxonomy" id="399742"/>
    <lineage>
        <taxon>Bacteria</taxon>
        <taxon>Pseudomonadati</taxon>
        <taxon>Pseudomonadota</taxon>
        <taxon>Gammaproteobacteria</taxon>
        <taxon>Enterobacterales</taxon>
        <taxon>Enterobacteriaceae</taxon>
        <taxon>Enterobacter</taxon>
    </lineage>
</organism>
<dbReference type="EC" id="2.7.1.30" evidence="1"/>
<dbReference type="EMBL" id="CP000653">
    <property type="protein sequence ID" value="ABP62702.1"/>
    <property type="molecule type" value="Genomic_DNA"/>
</dbReference>
<dbReference type="RefSeq" id="WP_015961006.1">
    <property type="nucleotide sequence ID" value="NC_009436.1"/>
</dbReference>
<dbReference type="SMR" id="A4WG72"/>
<dbReference type="STRING" id="399742.Ent638_4047"/>
<dbReference type="KEGG" id="ent:Ent638_4047"/>
<dbReference type="eggNOG" id="COG0554">
    <property type="taxonomic scope" value="Bacteria"/>
</dbReference>
<dbReference type="HOGENOM" id="CLU_009281_2_3_6"/>
<dbReference type="OrthoDB" id="9805576at2"/>
<dbReference type="UniPathway" id="UPA00618">
    <property type="reaction ID" value="UER00672"/>
</dbReference>
<dbReference type="Proteomes" id="UP000000230">
    <property type="component" value="Chromosome"/>
</dbReference>
<dbReference type="GO" id="GO:0005829">
    <property type="term" value="C:cytosol"/>
    <property type="evidence" value="ECO:0007669"/>
    <property type="project" value="TreeGrafter"/>
</dbReference>
<dbReference type="GO" id="GO:0005524">
    <property type="term" value="F:ATP binding"/>
    <property type="evidence" value="ECO:0007669"/>
    <property type="project" value="UniProtKB-UniRule"/>
</dbReference>
<dbReference type="GO" id="GO:0004370">
    <property type="term" value="F:glycerol kinase activity"/>
    <property type="evidence" value="ECO:0000250"/>
    <property type="project" value="UniProtKB"/>
</dbReference>
<dbReference type="GO" id="GO:0046872">
    <property type="term" value="F:metal ion binding"/>
    <property type="evidence" value="ECO:0007669"/>
    <property type="project" value="UniProtKB-KW"/>
</dbReference>
<dbReference type="GO" id="GO:0019563">
    <property type="term" value="P:glycerol catabolic process"/>
    <property type="evidence" value="ECO:0007669"/>
    <property type="project" value="UniProtKB-UniRule"/>
</dbReference>
<dbReference type="GO" id="GO:0006071">
    <property type="term" value="P:glycerol metabolic process"/>
    <property type="evidence" value="ECO:0000250"/>
    <property type="project" value="UniProtKB"/>
</dbReference>
<dbReference type="GO" id="GO:0006072">
    <property type="term" value="P:glycerol-3-phosphate metabolic process"/>
    <property type="evidence" value="ECO:0007669"/>
    <property type="project" value="InterPro"/>
</dbReference>
<dbReference type="CDD" id="cd07786">
    <property type="entry name" value="FGGY_EcGK_like"/>
    <property type="match status" value="1"/>
</dbReference>
<dbReference type="FunFam" id="3.30.420.40:FF:000007">
    <property type="entry name" value="Glycerol kinase"/>
    <property type="match status" value="1"/>
</dbReference>
<dbReference type="FunFam" id="3.30.420.40:FF:000008">
    <property type="entry name" value="Glycerol kinase"/>
    <property type="match status" value="1"/>
</dbReference>
<dbReference type="Gene3D" id="3.30.420.40">
    <property type="match status" value="2"/>
</dbReference>
<dbReference type="HAMAP" id="MF_00186">
    <property type="entry name" value="Glycerol_kin"/>
    <property type="match status" value="1"/>
</dbReference>
<dbReference type="InterPro" id="IPR043129">
    <property type="entry name" value="ATPase_NBD"/>
</dbReference>
<dbReference type="InterPro" id="IPR000577">
    <property type="entry name" value="Carb_kinase_FGGY"/>
</dbReference>
<dbReference type="InterPro" id="IPR018483">
    <property type="entry name" value="Carb_kinase_FGGY_CS"/>
</dbReference>
<dbReference type="InterPro" id="IPR018485">
    <property type="entry name" value="FGGY_C"/>
</dbReference>
<dbReference type="InterPro" id="IPR018484">
    <property type="entry name" value="FGGY_N"/>
</dbReference>
<dbReference type="InterPro" id="IPR005999">
    <property type="entry name" value="Glycerol_kin"/>
</dbReference>
<dbReference type="NCBIfam" id="TIGR01311">
    <property type="entry name" value="glycerol_kin"/>
    <property type="match status" value="1"/>
</dbReference>
<dbReference type="NCBIfam" id="NF000756">
    <property type="entry name" value="PRK00047.1"/>
    <property type="match status" value="1"/>
</dbReference>
<dbReference type="PANTHER" id="PTHR10196:SF69">
    <property type="entry name" value="GLYCEROL KINASE"/>
    <property type="match status" value="1"/>
</dbReference>
<dbReference type="PANTHER" id="PTHR10196">
    <property type="entry name" value="SUGAR KINASE"/>
    <property type="match status" value="1"/>
</dbReference>
<dbReference type="Pfam" id="PF02782">
    <property type="entry name" value="FGGY_C"/>
    <property type="match status" value="1"/>
</dbReference>
<dbReference type="Pfam" id="PF00370">
    <property type="entry name" value="FGGY_N"/>
    <property type="match status" value="1"/>
</dbReference>
<dbReference type="PIRSF" id="PIRSF000538">
    <property type="entry name" value="GlpK"/>
    <property type="match status" value="1"/>
</dbReference>
<dbReference type="SUPFAM" id="SSF53067">
    <property type="entry name" value="Actin-like ATPase domain"/>
    <property type="match status" value="2"/>
</dbReference>
<dbReference type="PROSITE" id="PS00933">
    <property type="entry name" value="FGGY_KINASES_1"/>
    <property type="match status" value="1"/>
</dbReference>
<dbReference type="PROSITE" id="PS00445">
    <property type="entry name" value="FGGY_KINASES_2"/>
    <property type="match status" value="1"/>
</dbReference>
<proteinExistence type="inferred from homology"/>
<sequence>MTDKKYIVALDQGTTSSRAVVMDHDANIVSVSQREFEQIYPKPGWVEHDPMEIWATQSSTLVEVLAKADISSDEIAAIGITNQRETAIVWERETGKPIYNAIVWQCRRTAEICEKLKRDGMEDYIRSTTGLVVDPYFSGTKVKWILDHVEGSRERAKRGELLFGTVDTWLIWKMTQGRVHVTDYTNASRTMLFNIHKLDWDDKMLEALDIPRAMLPEVRKSSEVYGQTNIGGKGGTRIPISGIAGDQQAALFGQLCVKEGMAKNTYGTGCFMLMNTGEKAVKSENGLLTTIACGPRGEVNYALEGAVFMAGASIQWLRDEMKLISDAFDSEYFATKVKDTNGVYVVPAFTGLGAPYWDPYARGAIFGLTRGVNSNHIIRATLESIAYQTRDVLEAMQADSGIRLHALRVDGGAVANNFLMQFQSDILGTRVERPEVREVTALGAAYLAGLAVGFWQNLDELQEKAVIEREFRPGIETTERNYRYSGWKKAVKRALAWEEHEE</sequence>
<gene>
    <name evidence="1" type="primary">glpK</name>
    <name type="ordered locus">Ent638_4047</name>
</gene>